<organism>
    <name type="scientific">African swine fever virus (strain Badajoz 1971 Vero-adapted)</name>
    <name type="common">Ba71V</name>
    <name type="synonym">ASFV</name>
    <dbReference type="NCBI Taxonomy" id="10498"/>
    <lineage>
        <taxon>Viruses</taxon>
        <taxon>Varidnaviria</taxon>
        <taxon>Bamfordvirae</taxon>
        <taxon>Nucleocytoviricota</taxon>
        <taxon>Pokkesviricetes</taxon>
        <taxon>Asfuvirales</taxon>
        <taxon>Asfarviridae</taxon>
        <taxon>Asfivirus</taxon>
        <taxon>African swine fever virus</taxon>
    </lineage>
</organism>
<name>VF267_ASFB7</name>
<organismHost>
    <name type="scientific">Ornithodoros</name>
    <name type="common">relapsing fever ticks</name>
    <dbReference type="NCBI Taxonomy" id="6937"/>
</organismHost>
<organismHost>
    <name type="scientific">Sus scrofa</name>
    <name type="common">Pig</name>
    <dbReference type="NCBI Taxonomy" id="9823"/>
</organismHost>
<feature type="chain" id="PRO_0000373624" description="Protein I267L">
    <location>
        <begin position="1"/>
        <end position="267"/>
    </location>
</feature>
<gene>
    <name type="ordered locus">Ba71V-137</name>
    <name type="ORF">I267L</name>
</gene>
<sequence length="267" mass="30828">MLLVLIDVDGFMGQLYNENGTQTILIPREVVIFYWEKNTASKILQLFFHGGIDPIFEKINQRSFSFQSRHIHHFTLDESPLPNSIALPTDTLQAFKAGKKMIFQHLVKITKDHEQILLLHKGGPEGEWVRSFNIPNATVQNLNDLCCPSVEKLVLKKRDYISSSIGCPKHIQGSNHCPVFECHVLFKWIQENTSIVQGVLKRPSLPYEEAVLFIEHRINMVDNHPFKKDSVKQNQKKKNWIATQFVQHGIYVDNGILSKIYNKYSLF</sequence>
<protein>
    <recommendedName>
        <fullName>Protein I267L</fullName>
        <shortName>pI267L</shortName>
    </recommendedName>
</protein>
<proteinExistence type="evidence at protein level"/>
<keyword id="KW-0244">Early protein</keyword>
<keyword id="KW-0945">Host-virus interaction</keyword>
<keyword id="KW-1090">Inhibition of host innate immune response by virus</keyword>
<keyword id="KW-1088">Inhibition of host RIG-I by virus</keyword>
<keyword id="KW-1113">Inhibition of host RLR pathway by virus</keyword>
<keyword id="KW-1185">Reference proteome</keyword>
<keyword id="KW-0899">Viral immunoevasion</keyword>
<accession>Q65205</accession>
<comment type="function">
    <text evidence="2">Plays a role in the inhibition of host RNA Pol-III-RIGI-mediated innate antiviral response. Mechanistically, interacts with host E3 ubiquitin ligase RNF135, disrupting RNF135-RIGI interaction and impairing RNF135-mediated 'Lys-63'-polyubiquitination and activation of RIGI.</text>
</comment>
<comment type="subunit">
    <text evidence="2">Interacts with host RNF135.</text>
</comment>
<comment type="induction">
    <text evidence="1">Expressed in the early phase of the viral replicative cycle.</text>
</comment>
<comment type="similarity">
    <text evidence="3">Belongs to the asfivirus I267L family.</text>
</comment>
<evidence type="ECO:0000269" key="1">
    <source>
    </source>
</evidence>
<evidence type="ECO:0000269" key="2">
    <source>
    </source>
</evidence>
<evidence type="ECO:0000305" key="3"/>
<dbReference type="EMBL" id="U18466">
    <property type="protein sequence ID" value="AAA65365.1"/>
    <property type="molecule type" value="Genomic_DNA"/>
</dbReference>
<dbReference type="RefSeq" id="NP_042829.1">
    <property type="nucleotide sequence ID" value="NC_001659.2"/>
</dbReference>
<dbReference type="GeneID" id="22220365"/>
<dbReference type="KEGG" id="vg:22220365"/>
<dbReference type="Proteomes" id="UP000000624">
    <property type="component" value="Segment"/>
</dbReference>
<dbReference type="GO" id="GO:0039540">
    <property type="term" value="P:symbiont-mediated suppression of host cytoplasmic pattern recognition receptor signaling pathway via inhibition of RIG-I activity"/>
    <property type="evidence" value="ECO:0007669"/>
    <property type="project" value="UniProtKB-KW"/>
</dbReference>
<reference key="1">
    <citation type="journal article" date="1995" name="Virology">
        <title>Analysis of the complete nucleotide sequence of African swine fever virus.</title>
        <authorList>
            <person name="Yanez R.J."/>
            <person name="Rodriguez J.M."/>
            <person name="Nogal M.L."/>
            <person name="Yuste L."/>
            <person name="Enriquez C."/>
            <person name="Rodriguez J.F."/>
            <person name="Vinuela E."/>
        </authorList>
    </citation>
    <scope>NUCLEOTIDE SEQUENCE [LARGE SCALE GENOMIC DNA]</scope>
</reference>
<reference key="2">
    <citation type="journal article" date="2020" name="J. Virol.">
        <title>The African Swine Fever Virus Transcriptome.</title>
        <authorList>
            <person name="Cackett G."/>
            <person name="Matelska D."/>
            <person name="Sykora M."/>
            <person name="Portugal R."/>
            <person name="Malecki M."/>
            <person name="Baehler J."/>
            <person name="Dixon L."/>
            <person name="Werner F."/>
        </authorList>
    </citation>
    <scope>INDUCTION</scope>
</reference>
<reference key="3">
    <citation type="journal article" date="2022" name="PLoS Pathog.">
        <title>African swine fever virus I267L acts as an important virulence factor by inhibiting RNA polymerase III-RIG-I-mediated innate immunity.</title>
        <authorList>
            <person name="Ran Y."/>
            <person name="Li D."/>
            <person name="Xiong M.G."/>
            <person name="Liu H.N."/>
            <person name="Feng T."/>
            <person name="Shi Z.W."/>
            <person name="Li Y.H."/>
            <person name="Wu H.N."/>
            <person name="Wang S.Y."/>
            <person name="Zheng H.X."/>
            <person name="Wang Y.Y."/>
        </authorList>
    </citation>
    <scope>FUNCTION</scope>
    <scope>INTERACTION WITH HOST RNF135</scope>
</reference>